<keyword id="KW-0012">Acyltransferase</keyword>
<keyword id="KW-1003">Cell membrane</keyword>
<keyword id="KW-0472">Membrane</keyword>
<keyword id="KW-0808">Transferase</keyword>
<keyword id="KW-0812">Transmembrane</keyword>
<keyword id="KW-1133">Transmembrane helix</keyword>
<sequence length="385" mass="44700">MNPVPAQREYFLDSIRAWLMLLGIPFHISLIYSSHTWHVNSAEPSLWLTLFNDFIHSFRMQVFFVISGYFSYMLFLRYPLKKWWKVRVERVGIPMLTAIPLLTLPQFIMLQYVKGKAESWPGLSLYDKYNTLAWELISHLWFLLVLVVMTTLCVWIFKRIRNNLENSDKTNKKFSMVKLSVIFLCLGIGYAVIRRTIFIVYPPILSNGMFNFIVMQTLFYLPFFILGALAFIFPHLKALFTTPSRGCTLAAALAFVAYLLNQRYGSGDAWMYETESVITMVLGLWMVNVVFSFGHRLLNFQSARVTYFVNASLFIYLVHHPLTLFFGAYITPHITSNWLGFLCGLIFVVGIAIILYEIHLRIPLLKFLFSGKPVVKRENDKAPAR</sequence>
<reference key="1">
    <citation type="journal article" date="2009" name="PLoS Genet.">
        <title>Organised genome dynamics in the Escherichia coli species results in highly diverse adaptive paths.</title>
        <authorList>
            <person name="Touchon M."/>
            <person name="Hoede C."/>
            <person name="Tenaillon O."/>
            <person name="Barbe V."/>
            <person name="Baeriswyl S."/>
            <person name="Bidet P."/>
            <person name="Bingen E."/>
            <person name="Bonacorsi S."/>
            <person name="Bouchier C."/>
            <person name="Bouvet O."/>
            <person name="Calteau A."/>
            <person name="Chiapello H."/>
            <person name="Clermont O."/>
            <person name="Cruveiller S."/>
            <person name="Danchin A."/>
            <person name="Diard M."/>
            <person name="Dossat C."/>
            <person name="Karoui M.E."/>
            <person name="Frapy E."/>
            <person name="Garry L."/>
            <person name="Ghigo J.M."/>
            <person name="Gilles A.M."/>
            <person name="Johnson J."/>
            <person name="Le Bouguenec C."/>
            <person name="Lescat M."/>
            <person name="Mangenot S."/>
            <person name="Martinez-Jehanne V."/>
            <person name="Matic I."/>
            <person name="Nassif X."/>
            <person name="Oztas S."/>
            <person name="Petit M.A."/>
            <person name="Pichon C."/>
            <person name="Rouy Z."/>
            <person name="Ruf C.S."/>
            <person name="Schneider D."/>
            <person name="Tourret J."/>
            <person name="Vacherie B."/>
            <person name="Vallenet D."/>
            <person name="Medigue C."/>
            <person name="Rocha E.P.C."/>
            <person name="Denamur E."/>
        </authorList>
    </citation>
    <scope>NUCLEOTIDE SEQUENCE [LARGE SCALE GENOMIC DNA]</scope>
    <source>
        <strain>IAI1</strain>
    </source>
</reference>
<proteinExistence type="inferred from homology"/>
<protein>
    <recommendedName>
        <fullName evidence="1">Glucans biosynthesis protein C</fullName>
        <ecNumber evidence="1">2.1.-.-</ecNumber>
    </recommendedName>
</protein>
<accession>B7M921</accession>
<comment type="function">
    <text evidence="1">Necessary for the succinyl substitution of periplasmic glucans. Could catalyze the transfer of succinyl residues from the cytoplasmic side of the membrane to the nascent glucan backbones on the periplasmic side of the membrane.</text>
</comment>
<comment type="pathway">
    <text evidence="1">Glycan metabolism; osmoregulated periplasmic glucan (OPG) biosynthesis.</text>
</comment>
<comment type="subcellular location">
    <subcellularLocation>
        <location evidence="1">Cell membrane</location>
        <topology evidence="1">Multi-pass membrane protein</topology>
    </subcellularLocation>
</comment>
<comment type="similarity">
    <text evidence="1">Belongs to the acyltransferase 3 family. OpgC subfamily.</text>
</comment>
<gene>
    <name evidence="1" type="primary">mdoC</name>
    <name evidence="1" type="synonym">opgC</name>
    <name type="ordered locus">ECIAI1_1081</name>
</gene>
<organism>
    <name type="scientific">Escherichia coli O8 (strain IAI1)</name>
    <dbReference type="NCBI Taxonomy" id="585034"/>
    <lineage>
        <taxon>Bacteria</taxon>
        <taxon>Pseudomonadati</taxon>
        <taxon>Pseudomonadota</taxon>
        <taxon>Gammaproteobacteria</taxon>
        <taxon>Enterobacterales</taxon>
        <taxon>Enterobacteriaceae</taxon>
        <taxon>Escherichia</taxon>
    </lineage>
</organism>
<name>OPGC_ECO8A</name>
<evidence type="ECO:0000255" key="1">
    <source>
        <dbReference type="HAMAP-Rule" id="MF_01066"/>
    </source>
</evidence>
<dbReference type="EC" id="2.1.-.-" evidence="1"/>
<dbReference type="EMBL" id="CU928160">
    <property type="protein sequence ID" value="CAQ97945.1"/>
    <property type="molecule type" value="Genomic_DNA"/>
</dbReference>
<dbReference type="RefSeq" id="WP_001070350.1">
    <property type="nucleotide sequence ID" value="NC_011741.1"/>
</dbReference>
<dbReference type="GeneID" id="93776367"/>
<dbReference type="KEGG" id="ecr:ECIAI1_1081"/>
<dbReference type="HOGENOM" id="CLU_036182_2_0_6"/>
<dbReference type="UniPathway" id="UPA00637"/>
<dbReference type="GO" id="GO:0005886">
    <property type="term" value="C:plasma membrane"/>
    <property type="evidence" value="ECO:0007669"/>
    <property type="project" value="UniProtKB-SubCell"/>
</dbReference>
<dbReference type="GO" id="GO:0016747">
    <property type="term" value="F:acyltransferase activity, transferring groups other than amino-acyl groups"/>
    <property type="evidence" value="ECO:0007669"/>
    <property type="project" value="InterPro"/>
</dbReference>
<dbReference type="GO" id="GO:0016741">
    <property type="term" value="F:transferase activity, transferring one-carbon groups"/>
    <property type="evidence" value="ECO:0007669"/>
    <property type="project" value="UniProtKB-UniRule"/>
</dbReference>
<dbReference type="GO" id="GO:0009250">
    <property type="term" value="P:glucan biosynthetic process"/>
    <property type="evidence" value="ECO:0007669"/>
    <property type="project" value="UniProtKB-UniRule"/>
</dbReference>
<dbReference type="HAMAP" id="MF_01066">
    <property type="entry name" value="MdoC_OpgC"/>
    <property type="match status" value="1"/>
</dbReference>
<dbReference type="InterPro" id="IPR002656">
    <property type="entry name" value="Acyl_transf_3_dom"/>
</dbReference>
<dbReference type="InterPro" id="IPR050623">
    <property type="entry name" value="Glucan_succinyl_AcylTrfase"/>
</dbReference>
<dbReference type="InterPro" id="IPR023723">
    <property type="entry name" value="Glucans_biosynth_C"/>
</dbReference>
<dbReference type="NCBIfam" id="NF003014">
    <property type="entry name" value="PRK03854.1"/>
    <property type="match status" value="1"/>
</dbReference>
<dbReference type="PANTHER" id="PTHR36927">
    <property type="entry name" value="BLR4337 PROTEIN"/>
    <property type="match status" value="1"/>
</dbReference>
<dbReference type="PANTHER" id="PTHR36927:SF3">
    <property type="entry name" value="GLUCANS BIOSYNTHESIS PROTEIN C"/>
    <property type="match status" value="1"/>
</dbReference>
<dbReference type="Pfam" id="PF01757">
    <property type="entry name" value="Acyl_transf_3"/>
    <property type="match status" value="1"/>
</dbReference>
<feature type="chain" id="PRO_1000136565" description="Glucans biosynthesis protein C">
    <location>
        <begin position="1"/>
        <end position="385"/>
    </location>
</feature>
<feature type="transmembrane region" description="Helical" evidence="1">
    <location>
        <begin position="17"/>
        <end position="37"/>
    </location>
</feature>
<feature type="transmembrane region" description="Helical" evidence="1">
    <location>
        <begin position="60"/>
        <end position="80"/>
    </location>
</feature>
<feature type="transmembrane region" description="Helical" evidence="1">
    <location>
        <begin position="91"/>
        <end position="111"/>
    </location>
</feature>
<feature type="transmembrane region" description="Helical" evidence="1">
    <location>
        <begin position="137"/>
        <end position="157"/>
    </location>
</feature>
<feature type="transmembrane region" description="Helical" evidence="1">
    <location>
        <begin position="173"/>
        <end position="193"/>
    </location>
</feature>
<feature type="transmembrane region" description="Helical" evidence="1">
    <location>
        <begin position="212"/>
        <end position="232"/>
    </location>
</feature>
<feature type="transmembrane region" description="Helical" evidence="1">
    <location>
        <begin position="239"/>
        <end position="259"/>
    </location>
</feature>
<feature type="transmembrane region" description="Helical" evidence="1">
    <location>
        <begin position="274"/>
        <end position="294"/>
    </location>
</feature>
<feature type="transmembrane region" description="Helical" evidence="1">
    <location>
        <begin position="311"/>
        <end position="331"/>
    </location>
</feature>
<feature type="transmembrane region" description="Helical" evidence="1">
    <location>
        <begin position="338"/>
        <end position="358"/>
    </location>
</feature>